<comment type="subunit">
    <text evidence="1">Forms oligomers.</text>
</comment>
<comment type="subcellular location">
    <subcellularLocation>
        <location evidence="1">Cytoplasm</location>
        <location evidence="1">Nucleoid</location>
    </subcellularLocation>
</comment>
<comment type="similarity">
    <text evidence="1">Belongs to the MraZ family.</text>
</comment>
<evidence type="ECO:0000255" key="1">
    <source>
        <dbReference type="HAMAP-Rule" id="MF_01008"/>
    </source>
</evidence>
<evidence type="ECO:0000255" key="2">
    <source>
        <dbReference type="PROSITE-ProRule" id="PRU01076"/>
    </source>
</evidence>
<proteinExistence type="inferred from homology"/>
<keyword id="KW-0963">Cytoplasm</keyword>
<keyword id="KW-0238">DNA-binding</keyword>
<keyword id="KW-0677">Repeat</keyword>
<keyword id="KW-0804">Transcription</keyword>
<keyword id="KW-0805">Transcription regulation</keyword>
<accession>P65440</accession>
<accession>Q99UT2</accession>
<feature type="chain" id="PRO_0000108543" description="Transcriptional regulator MraZ">
    <location>
        <begin position="1"/>
        <end position="143"/>
    </location>
</feature>
<feature type="domain" description="SpoVT-AbrB 1" evidence="2">
    <location>
        <begin position="5"/>
        <end position="47"/>
    </location>
</feature>
<feature type="domain" description="SpoVT-AbrB 2" evidence="2">
    <location>
        <begin position="76"/>
        <end position="119"/>
    </location>
</feature>
<name>MRAZ_STAAW</name>
<sequence length="143" mass="17238">MFMGEYDHQLDTKGRMIIPSKFRYDLNERFIITRGLDKCLFGYTLDEWQQIEEKMKTLPMTKKDARKFMRMFFSGAVEVELDKQGRINIPQNLRKYANLTKECTVIGVSNRIEIWDRETWNDFYEESEESFEDIAEDLIDFDF</sequence>
<reference key="1">
    <citation type="journal article" date="2002" name="Lancet">
        <title>Genome and virulence determinants of high virulence community-acquired MRSA.</title>
        <authorList>
            <person name="Baba T."/>
            <person name="Takeuchi F."/>
            <person name="Kuroda M."/>
            <person name="Yuzawa H."/>
            <person name="Aoki K."/>
            <person name="Oguchi A."/>
            <person name="Nagai Y."/>
            <person name="Iwama N."/>
            <person name="Asano K."/>
            <person name="Naimi T."/>
            <person name="Kuroda H."/>
            <person name="Cui L."/>
            <person name="Yamamoto K."/>
            <person name="Hiramatsu K."/>
        </authorList>
    </citation>
    <scope>NUCLEOTIDE SEQUENCE [LARGE SCALE GENOMIC DNA]</scope>
    <source>
        <strain>MW2</strain>
    </source>
</reference>
<dbReference type="EMBL" id="BA000033">
    <property type="protein sequence ID" value="BAB94926.1"/>
    <property type="molecule type" value="Genomic_DNA"/>
</dbReference>
<dbReference type="RefSeq" id="WP_000480800.1">
    <property type="nucleotide sequence ID" value="NC_003923.1"/>
</dbReference>
<dbReference type="SMR" id="P65440"/>
<dbReference type="GeneID" id="66839371"/>
<dbReference type="KEGG" id="sam:MW1061"/>
<dbReference type="HOGENOM" id="CLU_107907_0_5_9"/>
<dbReference type="GO" id="GO:0005737">
    <property type="term" value="C:cytoplasm"/>
    <property type="evidence" value="ECO:0007669"/>
    <property type="project" value="UniProtKB-UniRule"/>
</dbReference>
<dbReference type="GO" id="GO:0009295">
    <property type="term" value="C:nucleoid"/>
    <property type="evidence" value="ECO:0007669"/>
    <property type="project" value="UniProtKB-SubCell"/>
</dbReference>
<dbReference type="GO" id="GO:0003700">
    <property type="term" value="F:DNA-binding transcription factor activity"/>
    <property type="evidence" value="ECO:0007669"/>
    <property type="project" value="UniProtKB-UniRule"/>
</dbReference>
<dbReference type="GO" id="GO:0000976">
    <property type="term" value="F:transcription cis-regulatory region binding"/>
    <property type="evidence" value="ECO:0007669"/>
    <property type="project" value="TreeGrafter"/>
</dbReference>
<dbReference type="GO" id="GO:2000143">
    <property type="term" value="P:negative regulation of DNA-templated transcription initiation"/>
    <property type="evidence" value="ECO:0007669"/>
    <property type="project" value="TreeGrafter"/>
</dbReference>
<dbReference type="CDD" id="cd16321">
    <property type="entry name" value="MraZ_C"/>
    <property type="match status" value="1"/>
</dbReference>
<dbReference type="CDD" id="cd16320">
    <property type="entry name" value="MraZ_N"/>
    <property type="match status" value="1"/>
</dbReference>
<dbReference type="FunFam" id="3.40.1550.20:FF:000002">
    <property type="entry name" value="Transcriptional regulator MraZ"/>
    <property type="match status" value="1"/>
</dbReference>
<dbReference type="Gene3D" id="3.40.1550.20">
    <property type="entry name" value="Transcriptional regulator MraZ domain"/>
    <property type="match status" value="1"/>
</dbReference>
<dbReference type="HAMAP" id="MF_01008">
    <property type="entry name" value="MraZ"/>
    <property type="match status" value="1"/>
</dbReference>
<dbReference type="InterPro" id="IPR003444">
    <property type="entry name" value="MraZ"/>
</dbReference>
<dbReference type="InterPro" id="IPR035644">
    <property type="entry name" value="MraZ_C"/>
</dbReference>
<dbReference type="InterPro" id="IPR020603">
    <property type="entry name" value="MraZ_dom"/>
</dbReference>
<dbReference type="InterPro" id="IPR035642">
    <property type="entry name" value="MraZ_N"/>
</dbReference>
<dbReference type="InterPro" id="IPR038619">
    <property type="entry name" value="MraZ_sf"/>
</dbReference>
<dbReference type="InterPro" id="IPR007159">
    <property type="entry name" value="SpoVT-AbrB_dom"/>
</dbReference>
<dbReference type="InterPro" id="IPR037914">
    <property type="entry name" value="SpoVT-AbrB_sf"/>
</dbReference>
<dbReference type="NCBIfam" id="TIGR00242">
    <property type="entry name" value="division/cell wall cluster transcriptional repressor MraZ"/>
    <property type="match status" value="1"/>
</dbReference>
<dbReference type="PANTHER" id="PTHR34701">
    <property type="entry name" value="TRANSCRIPTIONAL REGULATOR MRAZ"/>
    <property type="match status" value="1"/>
</dbReference>
<dbReference type="PANTHER" id="PTHR34701:SF1">
    <property type="entry name" value="TRANSCRIPTIONAL REGULATOR MRAZ"/>
    <property type="match status" value="1"/>
</dbReference>
<dbReference type="Pfam" id="PF02381">
    <property type="entry name" value="MraZ"/>
    <property type="match status" value="2"/>
</dbReference>
<dbReference type="SUPFAM" id="SSF89447">
    <property type="entry name" value="AbrB/MazE/MraZ-like"/>
    <property type="match status" value="1"/>
</dbReference>
<dbReference type="PROSITE" id="PS51740">
    <property type="entry name" value="SPOVT_ABRB"/>
    <property type="match status" value="2"/>
</dbReference>
<gene>
    <name evidence="1" type="primary">mraZ</name>
    <name type="ordered locus">MW1061</name>
</gene>
<organism>
    <name type="scientific">Staphylococcus aureus (strain MW2)</name>
    <dbReference type="NCBI Taxonomy" id="196620"/>
    <lineage>
        <taxon>Bacteria</taxon>
        <taxon>Bacillati</taxon>
        <taxon>Bacillota</taxon>
        <taxon>Bacilli</taxon>
        <taxon>Bacillales</taxon>
        <taxon>Staphylococcaceae</taxon>
        <taxon>Staphylococcus</taxon>
    </lineage>
</organism>
<protein>
    <recommendedName>
        <fullName>Transcriptional regulator MraZ</fullName>
    </recommendedName>
</protein>